<gene>
    <name type="primary">Scg2</name>
    <name type="synonym">Chgc</name>
    <name type="synonym">Scg-2</name>
</gene>
<keyword id="KW-0106">Calcium</keyword>
<keyword id="KW-0165">Cleavage on pair of basic residues</keyword>
<keyword id="KW-0903">Direct protein sequencing</keyword>
<keyword id="KW-0597">Phosphoprotein</keyword>
<keyword id="KW-1185">Reference proteome</keyword>
<keyword id="KW-0964">Secreted</keyword>
<keyword id="KW-0732">Signal</keyword>
<keyword id="KW-0765">Sulfation</keyword>
<feature type="signal peptide">
    <location>
        <begin position="1"/>
        <end position="30"/>
    </location>
</feature>
<feature type="chain" id="PRO_0000005457" description="Secretogranin-2">
    <location>
        <begin position="31"/>
        <end position="619"/>
    </location>
</feature>
<feature type="peptide" id="PRO_0000005458" description="Secretoneurin" evidence="2">
    <location>
        <begin position="184"/>
        <end position="216"/>
    </location>
</feature>
<feature type="peptide" id="PRO_0000432740" description="Manserin" evidence="5">
    <location>
        <begin position="529"/>
        <end position="568"/>
    </location>
</feature>
<feature type="region of interest" description="Disordered" evidence="4">
    <location>
        <begin position="247"/>
        <end position="307"/>
    </location>
</feature>
<feature type="compositionally biased region" description="Basic and acidic residues" evidence="4">
    <location>
        <begin position="255"/>
        <end position="286"/>
    </location>
</feature>
<feature type="compositionally biased region" description="Basic and acidic residues" evidence="4">
    <location>
        <begin position="295"/>
        <end position="307"/>
    </location>
</feature>
<feature type="modified residue" description="Sulfotyrosine" evidence="1">
    <location>
        <position position="153"/>
    </location>
</feature>
<feature type="modified residue" description="Phosphoserine" evidence="7">
    <location>
        <position position="176"/>
    </location>
</feature>
<feature type="modified residue" description="Phosphoserine" evidence="7">
    <location>
        <position position="270"/>
    </location>
</feature>
<feature type="modified residue" description="Phosphoserine" evidence="7">
    <location>
        <position position="434"/>
    </location>
</feature>
<feature type="modified residue" description="Phosphoserine" evidence="7">
    <location>
        <position position="534"/>
    </location>
</feature>
<feature type="modified residue" description="Phosphoserine" evidence="3">
    <location>
        <position position="557"/>
    </location>
</feature>
<feature type="modified residue" description="Phosphoserine" evidence="7">
    <location>
        <position position="558"/>
    </location>
</feature>
<comment type="function">
    <text evidence="1">Neuroendocrine protein of the granin family that regulates the biogenesis of secretory granules.</text>
</comment>
<comment type="subunit">
    <text evidence="1">Interacts with Secretogranin III/SCG3.</text>
</comment>
<comment type="subcellular location">
    <subcellularLocation>
        <location>Secreted</location>
    </subcellularLocation>
    <text>Neuroendocrine and endocrine secretory granules.</text>
</comment>
<comment type="tissue specificity">
    <molecule>Manserin</molecule>
    <text evidence="5">Brain. Expression in the pituitary is restricted to the anterior lobe. Expression in the hypothalamus is observed in the neuronal cells and neurons of arcuate nucleus, supraoptic nucleus and median eminence (at protein level).</text>
</comment>
<comment type="mass spectrometry" mass="4637.0" method="MALDI" evidence="5">
    <molecule>Manserin</molecule>
</comment>
<comment type="miscellaneous">
    <text>Binds calcium with a low-affinity.</text>
</comment>
<comment type="similarity">
    <text evidence="6">Belongs to the chromogranin/secretogranin protein family.</text>
</comment>
<organism>
    <name type="scientific">Rattus norvegicus</name>
    <name type="common">Rat</name>
    <dbReference type="NCBI Taxonomy" id="10116"/>
    <lineage>
        <taxon>Eukaryota</taxon>
        <taxon>Metazoa</taxon>
        <taxon>Chordata</taxon>
        <taxon>Craniata</taxon>
        <taxon>Vertebrata</taxon>
        <taxon>Euteleostomi</taxon>
        <taxon>Mammalia</taxon>
        <taxon>Eutheria</taxon>
        <taxon>Euarchontoglires</taxon>
        <taxon>Glires</taxon>
        <taxon>Rodentia</taxon>
        <taxon>Myomorpha</taxon>
        <taxon>Muroidea</taxon>
        <taxon>Muridae</taxon>
        <taxon>Murinae</taxon>
        <taxon>Rattus</taxon>
    </lineage>
</organism>
<accession>P10362</accession>
<reference key="1">
    <citation type="journal article" date="1988" name="Nucleic Acids Res.">
        <title>The primary structure of rat secretogranin II deduced from a cDNA sequence.</title>
        <authorList>
            <person name="Gerdes H.-H."/>
            <person name="Philipps E."/>
            <person name="Huttner W.B."/>
        </authorList>
    </citation>
    <scope>NUCLEOTIDE SEQUENCE [MRNA]</scope>
</reference>
<reference key="2">
    <citation type="journal article" date="1993" name="Neuroendocrinology">
        <title>Regulation of expression of secretogranin II mRNA in female rat pituitary and hypothalamus.</title>
        <authorList>
            <person name="Kakar S.S."/>
            <person name="Wei N."/>
            <person name="Mulchahey J.J."/>
            <person name="Leboeuf R.D."/>
            <person name="Neill J.D."/>
        </authorList>
    </citation>
    <scope>NUCLEOTIDE SEQUENCE [MRNA]</scope>
</reference>
<reference key="3">
    <citation type="journal article" date="1998" name="Neurosci. Lett.">
        <title>Formation and sequence analysis of secretoneurin, a neuropeptide derived from secretogranin II, in mammalian, bird, reptile, amphibian and fish brains.</title>
        <authorList>
            <person name="Leitner B."/>
            <person name="Schneitler C."/>
            <person name="Klocker H."/>
            <person name="Volknandt W."/>
            <person name="Zimmermann H."/>
            <person name="Winkler H."/>
            <person name="Fischer-Colbrie R."/>
        </authorList>
    </citation>
    <scope>NUCLEOTIDE SEQUENCE [MRNA] OF 184-216</scope>
</reference>
<reference key="4">
    <citation type="journal article" date="2004" name="NeuroReport">
        <title>Manserin, a novel peptide from secretogranin II in the neuroendocrine system.</title>
        <authorList>
            <person name="Yajima A."/>
            <person name="Ikeda M."/>
            <person name="Miyazaki K."/>
            <person name="Maeshima T."/>
            <person name="Narita N."/>
            <person name="Narita M."/>
        </authorList>
    </citation>
    <scope>PROTEIN SEQUENCE OF 529-568</scope>
    <scope>MASS SPECTROMETRY</scope>
    <scope>TISSUE SPECIFICITY</scope>
</reference>
<reference key="5">
    <citation type="journal article" date="2012" name="Nat. Commun.">
        <title>Quantitative maps of protein phosphorylation sites across 14 different rat organs and tissues.</title>
        <authorList>
            <person name="Lundby A."/>
            <person name="Secher A."/>
            <person name="Lage K."/>
            <person name="Nordsborg N.B."/>
            <person name="Dmytriyev A."/>
            <person name="Lundby C."/>
            <person name="Olsen J.V."/>
        </authorList>
    </citation>
    <scope>PHOSPHORYLATION [LARGE SCALE ANALYSIS] AT SER-176; SER-270; SER-434; SER-534 AND SER-558</scope>
    <scope>IDENTIFICATION BY MASS SPECTROMETRY [LARGE SCALE ANALYSIS]</scope>
</reference>
<evidence type="ECO:0000250" key="1">
    <source>
        <dbReference type="UniProtKB" id="P13521"/>
    </source>
</evidence>
<evidence type="ECO:0000250" key="2">
    <source>
        <dbReference type="UniProtKB" id="P30945"/>
    </source>
</evidence>
<evidence type="ECO:0000250" key="3">
    <source>
        <dbReference type="UniProtKB" id="Q03517"/>
    </source>
</evidence>
<evidence type="ECO:0000256" key="4">
    <source>
        <dbReference type="SAM" id="MobiDB-lite"/>
    </source>
</evidence>
<evidence type="ECO:0000269" key="5">
    <source>
    </source>
</evidence>
<evidence type="ECO:0000305" key="6"/>
<evidence type="ECO:0007744" key="7">
    <source>
    </source>
</evidence>
<name>SCG2_RAT</name>
<dbReference type="EMBL" id="X13618">
    <property type="protein sequence ID" value="CAA31950.1"/>
    <property type="molecule type" value="mRNA"/>
</dbReference>
<dbReference type="EMBL" id="M93669">
    <property type="protein sequence ID" value="AAA42135.1"/>
    <property type="molecule type" value="mRNA"/>
</dbReference>
<dbReference type="PIR" id="S02180">
    <property type="entry name" value="S02180"/>
</dbReference>
<dbReference type="RefSeq" id="NP_073160.1">
    <property type="nucleotide sequence ID" value="NM_022669.1"/>
</dbReference>
<dbReference type="SMR" id="P10362"/>
<dbReference type="FunCoup" id="P10362">
    <property type="interactions" value="590"/>
</dbReference>
<dbReference type="IntAct" id="P10362">
    <property type="interactions" value="1"/>
</dbReference>
<dbReference type="STRING" id="10116.ENSRNOP00000020219"/>
<dbReference type="iPTMnet" id="P10362"/>
<dbReference type="PhosphoSitePlus" id="P10362"/>
<dbReference type="jPOST" id="P10362"/>
<dbReference type="PaxDb" id="10116-ENSRNOP00000020219"/>
<dbReference type="GeneID" id="24765"/>
<dbReference type="KEGG" id="rno:24765"/>
<dbReference type="UCSC" id="RGD:3626">
    <property type="organism name" value="rat"/>
</dbReference>
<dbReference type="AGR" id="RGD:3626"/>
<dbReference type="CTD" id="7857"/>
<dbReference type="RGD" id="3626">
    <property type="gene designation" value="Scg2"/>
</dbReference>
<dbReference type="eggNOG" id="ENOG502QV5W">
    <property type="taxonomic scope" value="Eukaryota"/>
</dbReference>
<dbReference type="InParanoid" id="P10362"/>
<dbReference type="OrthoDB" id="8894600at2759"/>
<dbReference type="PhylomeDB" id="P10362"/>
<dbReference type="Reactome" id="R-RNO-381426">
    <property type="pathway name" value="Regulation of Insulin-like Growth Factor (IGF) transport and uptake by Insulin-like Growth Factor Binding Proteins (IGFBPs)"/>
</dbReference>
<dbReference type="Reactome" id="R-RNO-8957275">
    <property type="pathway name" value="Post-translational protein phosphorylation"/>
</dbReference>
<dbReference type="PRO" id="PR:P10362"/>
<dbReference type="Proteomes" id="UP000002494">
    <property type="component" value="Unplaced"/>
</dbReference>
<dbReference type="GO" id="GO:0031045">
    <property type="term" value="C:dense core granule"/>
    <property type="evidence" value="ECO:0000266"/>
    <property type="project" value="RGD"/>
</dbReference>
<dbReference type="GO" id="GO:0005615">
    <property type="term" value="C:extracellular space"/>
    <property type="evidence" value="ECO:0000250"/>
    <property type="project" value="HGNC-UCL"/>
</dbReference>
<dbReference type="GO" id="GO:0098992">
    <property type="term" value="C:neuronal dense core vesicle"/>
    <property type="evidence" value="ECO:0000266"/>
    <property type="project" value="RGD"/>
</dbReference>
<dbReference type="GO" id="GO:0030141">
    <property type="term" value="C:secretory granule"/>
    <property type="evidence" value="ECO:0000314"/>
    <property type="project" value="UniProtKB"/>
</dbReference>
<dbReference type="GO" id="GO:0042056">
    <property type="term" value="F:chemoattractant activity"/>
    <property type="evidence" value="ECO:0000250"/>
    <property type="project" value="HGNC-UCL"/>
</dbReference>
<dbReference type="GO" id="GO:0005125">
    <property type="term" value="F:cytokine activity"/>
    <property type="evidence" value="ECO:0000250"/>
    <property type="project" value="HGNC-UCL"/>
</dbReference>
<dbReference type="GO" id="GO:0001525">
    <property type="term" value="P:angiogenesis"/>
    <property type="evidence" value="ECO:0000250"/>
    <property type="project" value="HGNC-UCL"/>
</dbReference>
<dbReference type="GO" id="GO:0048245">
    <property type="term" value="P:eosinophil chemotaxis"/>
    <property type="evidence" value="ECO:0000250"/>
    <property type="project" value="HGNC-UCL"/>
</dbReference>
<dbReference type="GO" id="GO:0050930">
    <property type="term" value="P:induction of positive chemotaxis"/>
    <property type="evidence" value="ECO:0000250"/>
    <property type="project" value="HGNC-UCL"/>
</dbReference>
<dbReference type="GO" id="GO:0035556">
    <property type="term" value="P:intracellular signal transduction"/>
    <property type="evidence" value="ECO:0000250"/>
    <property type="project" value="HGNC-UCL"/>
</dbReference>
<dbReference type="GO" id="GO:0000165">
    <property type="term" value="P:MAPK cascade"/>
    <property type="evidence" value="ECO:0000250"/>
    <property type="project" value="HGNC-UCL"/>
</dbReference>
<dbReference type="GO" id="GO:2000352">
    <property type="term" value="P:negative regulation of endothelial cell apoptotic process"/>
    <property type="evidence" value="ECO:0000250"/>
    <property type="project" value="HGNC"/>
</dbReference>
<dbReference type="GO" id="GO:2001237">
    <property type="term" value="P:negative regulation of extrinsic apoptotic signaling pathway"/>
    <property type="evidence" value="ECO:0000266"/>
    <property type="project" value="RGD"/>
</dbReference>
<dbReference type="GO" id="GO:0050918">
    <property type="term" value="P:positive chemotaxis"/>
    <property type="evidence" value="ECO:0000250"/>
    <property type="project" value="HGNC"/>
</dbReference>
<dbReference type="GO" id="GO:0001938">
    <property type="term" value="P:positive regulation of endothelial cell proliferation"/>
    <property type="evidence" value="ECO:0000250"/>
    <property type="project" value="HGNC-UCL"/>
</dbReference>
<dbReference type="InterPro" id="IPR018054">
    <property type="entry name" value="Chromogranin_CS"/>
</dbReference>
<dbReference type="InterPro" id="IPR001990">
    <property type="entry name" value="Granin"/>
</dbReference>
<dbReference type="InterPro" id="IPR038858">
    <property type="entry name" value="ScgII"/>
</dbReference>
<dbReference type="PANTHER" id="PTHR15119">
    <property type="entry name" value="SECRETOGRANIN II"/>
    <property type="match status" value="1"/>
</dbReference>
<dbReference type="PANTHER" id="PTHR15119:SF0">
    <property type="entry name" value="SECRETOGRANIN-2"/>
    <property type="match status" value="1"/>
</dbReference>
<dbReference type="Pfam" id="PF01271">
    <property type="entry name" value="Granin"/>
    <property type="match status" value="1"/>
</dbReference>
<dbReference type="PROSITE" id="PS00422">
    <property type="entry name" value="GRANINS_1"/>
    <property type="match status" value="1"/>
</dbReference>
<sequence length="619" mass="71031">MTESKAYRFGAVLLLIHLIFLVPGTEAASFQRNQLLQKEPDLRLENVQKFPSPEMIRALEYIEKLRQQAHREESSPDYNPYQGISVPLQLKENGEESHLAESSRDVLSEDEWMRIILEALRQAENEPPSALKENKPYALNLEKNFPVDTPDDYETQQWPERKLKHMRFPLMYEENSRENPFKRTNEIVEEQYTPQSLATLESVFQELGKLTGPSNQKRERVDEEQKLYTDDEDDVYKTNNIAYEDVVGGEDWSPMEEKIETQTQEEVRDSKENTEKNEQINEEMKRSGHLGLPDEGNRKESKDQLSEDASKVITYLRRLVNAVGSGRSQSGQNGDRAARLLERPLDSQSIYQLIEISRNLQIPPEDLIEMLKAGEKPNGLVEPEQDLELAVDLDDIPEADIDRPDMFQSKTLSKGGYPKAPGRGMMEALPDGLSVEDILNVLGMENVANQKSPYFPNQYSRDKALLRLPYGPGKSRANQIPKVAWIPDVESRQAPYDNLNDKDQELGEYLARMLVKYPELMNTNQLKRVPSPGSSEDDLQEEEQLEQAIKEHLGQGSSQEMEKLAKVSKRIPAGSLKNEDTPNRQYLDEDMLLKVLEYLNQEQAEQGREHLAKRAMENM</sequence>
<protein>
    <recommendedName>
        <fullName>Secretogranin-2</fullName>
    </recommendedName>
    <alternativeName>
        <fullName>Chromogranin-C</fullName>
    </alternativeName>
    <alternativeName>
        <fullName>Secretogranin II</fullName>
        <shortName>SgII</shortName>
    </alternativeName>
    <component>
        <recommendedName>
            <fullName>Secretoneurin</fullName>
            <shortName>SN</shortName>
        </recommendedName>
    </component>
    <component>
        <recommendedName>
            <fullName>Manserin</fullName>
        </recommendedName>
    </component>
</protein>
<proteinExistence type="evidence at protein level"/>